<comment type="similarity">
    <text evidence="1">Belongs to the bacterial ribosomal protein bS16 family.</text>
</comment>
<dbReference type="EMBL" id="CP000946">
    <property type="protein sequence ID" value="ACA76741.1"/>
    <property type="molecule type" value="Genomic_DNA"/>
</dbReference>
<dbReference type="RefSeq" id="WP_000256450.1">
    <property type="nucleotide sequence ID" value="NZ_MTFT01000037.1"/>
</dbReference>
<dbReference type="SMR" id="B1IVM4"/>
<dbReference type="GeneID" id="93774459"/>
<dbReference type="KEGG" id="ecl:EcolC_1074"/>
<dbReference type="HOGENOM" id="CLU_100590_5_1_6"/>
<dbReference type="GO" id="GO:0005737">
    <property type="term" value="C:cytoplasm"/>
    <property type="evidence" value="ECO:0007669"/>
    <property type="project" value="UniProtKB-ARBA"/>
</dbReference>
<dbReference type="GO" id="GO:0015935">
    <property type="term" value="C:small ribosomal subunit"/>
    <property type="evidence" value="ECO:0007669"/>
    <property type="project" value="TreeGrafter"/>
</dbReference>
<dbReference type="GO" id="GO:0003735">
    <property type="term" value="F:structural constituent of ribosome"/>
    <property type="evidence" value="ECO:0007669"/>
    <property type="project" value="InterPro"/>
</dbReference>
<dbReference type="GO" id="GO:0006412">
    <property type="term" value="P:translation"/>
    <property type="evidence" value="ECO:0007669"/>
    <property type="project" value="UniProtKB-UniRule"/>
</dbReference>
<dbReference type="FunFam" id="3.30.1320.10:FF:000001">
    <property type="entry name" value="30S ribosomal protein S16"/>
    <property type="match status" value="1"/>
</dbReference>
<dbReference type="Gene3D" id="3.30.1320.10">
    <property type="match status" value="1"/>
</dbReference>
<dbReference type="HAMAP" id="MF_00385">
    <property type="entry name" value="Ribosomal_bS16"/>
    <property type="match status" value="1"/>
</dbReference>
<dbReference type="InterPro" id="IPR000307">
    <property type="entry name" value="Ribosomal_bS16"/>
</dbReference>
<dbReference type="InterPro" id="IPR020592">
    <property type="entry name" value="Ribosomal_bS16_CS"/>
</dbReference>
<dbReference type="InterPro" id="IPR023803">
    <property type="entry name" value="Ribosomal_bS16_dom_sf"/>
</dbReference>
<dbReference type="NCBIfam" id="TIGR00002">
    <property type="entry name" value="S16"/>
    <property type="match status" value="1"/>
</dbReference>
<dbReference type="PANTHER" id="PTHR12919">
    <property type="entry name" value="30S RIBOSOMAL PROTEIN S16"/>
    <property type="match status" value="1"/>
</dbReference>
<dbReference type="PANTHER" id="PTHR12919:SF20">
    <property type="entry name" value="SMALL RIBOSOMAL SUBUNIT PROTEIN BS16M"/>
    <property type="match status" value="1"/>
</dbReference>
<dbReference type="Pfam" id="PF00886">
    <property type="entry name" value="Ribosomal_S16"/>
    <property type="match status" value="1"/>
</dbReference>
<dbReference type="SUPFAM" id="SSF54565">
    <property type="entry name" value="Ribosomal protein S16"/>
    <property type="match status" value="1"/>
</dbReference>
<dbReference type="PROSITE" id="PS00732">
    <property type="entry name" value="RIBOSOMAL_S16"/>
    <property type="match status" value="1"/>
</dbReference>
<protein>
    <recommendedName>
        <fullName evidence="1">Small ribosomal subunit protein bS16</fullName>
    </recommendedName>
    <alternativeName>
        <fullName evidence="2">30S ribosomal protein S16</fullName>
    </alternativeName>
</protein>
<evidence type="ECO:0000255" key="1">
    <source>
        <dbReference type="HAMAP-Rule" id="MF_00385"/>
    </source>
</evidence>
<evidence type="ECO:0000305" key="2"/>
<sequence length="82" mass="9191">MVTIRLARHGAKKRPFYQVVVADSRNARNGRFIERVGFFNPIASEKEEGTRLDLDRIAHWVGQGATISDRVAALIKEVNKAA</sequence>
<organism>
    <name type="scientific">Escherichia coli (strain ATCC 8739 / DSM 1576 / NBRC 3972 / NCIMB 8545 / WDCM 00012 / Crooks)</name>
    <dbReference type="NCBI Taxonomy" id="481805"/>
    <lineage>
        <taxon>Bacteria</taxon>
        <taxon>Pseudomonadati</taxon>
        <taxon>Pseudomonadota</taxon>
        <taxon>Gammaproteobacteria</taxon>
        <taxon>Enterobacterales</taxon>
        <taxon>Enterobacteriaceae</taxon>
        <taxon>Escherichia</taxon>
    </lineage>
</organism>
<name>RS16_ECOLC</name>
<feature type="chain" id="PRO_1000080149" description="Small ribosomal subunit protein bS16">
    <location>
        <begin position="1"/>
        <end position="82"/>
    </location>
</feature>
<accession>B1IVM4</accession>
<proteinExistence type="inferred from homology"/>
<gene>
    <name evidence="1" type="primary">rpsP</name>
    <name type="ordered locus">EcolC_1074</name>
</gene>
<reference key="1">
    <citation type="submission" date="2008-02" db="EMBL/GenBank/DDBJ databases">
        <title>Complete sequence of Escherichia coli C str. ATCC 8739.</title>
        <authorList>
            <person name="Copeland A."/>
            <person name="Lucas S."/>
            <person name="Lapidus A."/>
            <person name="Glavina del Rio T."/>
            <person name="Dalin E."/>
            <person name="Tice H."/>
            <person name="Bruce D."/>
            <person name="Goodwin L."/>
            <person name="Pitluck S."/>
            <person name="Kiss H."/>
            <person name="Brettin T."/>
            <person name="Detter J.C."/>
            <person name="Han C."/>
            <person name="Kuske C.R."/>
            <person name="Schmutz J."/>
            <person name="Larimer F."/>
            <person name="Land M."/>
            <person name="Hauser L."/>
            <person name="Kyrpides N."/>
            <person name="Mikhailova N."/>
            <person name="Ingram L."/>
            <person name="Richardson P."/>
        </authorList>
    </citation>
    <scope>NUCLEOTIDE SEQUENCE [LARGE SCALE GENOMIC DNA]</scope>
    <source>
        <strain>ATCC 8739 / DSM 1576 / NBRC 3972 / NCIMB 8545 / WDCM 00012 / Crooks</strain>
    </source>
</reference>
<keyword id="KW-0687">Ribonucleoprotein</keyword>
<keyword id="KW-0689">Ribosomal protein</keyword>